<protein>
    <recommendedName>
        <fullName evidence="1">Large ribosomal subunit protein uL5</fullName>
    </recommendedName>
    <alternativeName>
        <fullName evidence="2">50S ribosomal protein L5</fullName>
    </alternativeName>
</protein>
<comment type="function">
    <text evidence="1">This is one of the proteins that bind and probably mediate the attachment of the 5S RNA into the large ribosomal subunit, where it forms part of the central protuberance. In the 70S ribosome it contacts protein S13 of the 30S subunit (bridge B1b), connecting the 2 subunits; this bridge is implicated in subunit movement. Contacts the P site tRNA; the 5S rRNA and some of its associated proteins might help stabilize positioning of ribosome-bound tRNAs.</text>
</comment>
<comment type="subunit">
    <text evidence="1">Part of the 50S ribosomal subunit; part of the 5S rRNA/L5/L18/L25 subcomplex. Contacts the 5S rRNA and the P site tRNA. Forms a bridge to the 30S subunit in the 70S ribosome.</text>
</comment>
<comment type="similarity">
    <text evidence="1">Belongs to the universal ribosomal protein uL5 family.</text>
</comment>
<reference key="1">
    <citation type="journal article" date="2007" name="Nat. Biotechnol.">
        <title>Genome sequence and identification of candidate vaccine antigens from the animal pathogen Dichelobacter nodosus.</title>
        <authorList>
            <person name="Myers G.S.A."/>
            <person name="Parker D."/>
            <person name="Al-Hasani K."/>
            <person name="Kennan R.M."/>
            <person name="Seemann T."/>
            <person name="Ren Q."/>
            <person name="Badger J.H."/>
            <person name="Selengut J.D."/>
            <person name="Deboy R.T."/>
            <person name="Tettelin H."/>
            <person name="Boyce J.D."/>
            <person name="McCarl V.P."/>
            <person name="Han X."/>
            <person name="Nelson W.C."/>
            <person name="Madupu R."/>
            <person name="Mohamoud Y."/>
            <person name="Holley T."/>
            <person name="Fedorova N."/>
            <person name="Khouri H."/>
            <person name="Bottomley S.P."/>
            <person name="Whittington R.J."/>
            <person name="Adler B."/>
            <person name="Songer J.G."/>
            <person name="Rood J.I."/>
            <person name="Paulsen I.T."/>
        </authorList>
    </citation>
    <scope>NUCLEOTIDE SEQUENCE [LARGE SCALE GENOMIC DNA]</scope>
    <source>
        <strain>VCS1703A</strain>
    </source>
</reference>
<keyword id="KW-1185">Reference proteome</keyword>
<keyword id="KW-0687">Ribonucleoprotein</keyword>
<keyword id="KW-0689">Ribosomal protein</keyword>
<keyword id="KW-0694">RNA-binding</keyword>
<keyword id="KW-0699">rRNA-binding</keyword>
<keyword id="KW-0820">tRNA-binding</keyword>
<dbReference type="EMBL" id="CP000513">
    <property type="protein sequence ID" value="ABQ14052.1"/>
    <property type="molecule type" value="Genomic_DNA"/>
</dbReference>
<dbReference type="RefSeq" id="WP_012031558.1">
    <property type="nucleotide sequence ID" value="NC_009446.1"/>
</dbReference>
<dbReference type="SMR" id="A5EX87"/>
<dbReference type="STRING" id="246195.DNO_1263"/>
<dbReference type="KEGG" id="dno:DNO_1263"/>
<dbReference type="eggNOG" id="COG0094">
    <property type="taxonomic scope" value="Bacteria"/>
</dbReference>
<dbReference type="HOGENOM" id="CLU_061015_2_1_6"/>
<dbReference type="OrthoDB" id="9806626at2"/>
<dbReference type="Proteomes" id="UP000000248">
    <property type="component" value="Chromosome"/>
</dbReference>
<dbReference type="GO" id="GO:1990904">
    <property type="term" value="C:ribonucleoprotein complex"/>
    <property type="evidence" value="ECO:0007669"/>
    <property type="project" value="UniProtKB-KW"/>
</dbReference>
<dbReference type="GO" id="GO:0005840">
    <property type="term" value="C:ribosome"/>
    <property type="evidence" value="ECO:0007669"/>
    <property type="project" value="UniProtKB-KW"/>
</dbReference>
<dbReference type="GO" id="GO:0019843">
    <property type="term" value="F:rRNA binding"/>
    <property type="evidence" value="ECO:0007669"/>
    <property type="project" value="UniProtKB-UniRule"/>
</dbReference>
<dbReference type="GO" id="GO:0003735">
    <property type="term" value="F:structural constituent of ribosome"/>
    <property type="evidence" value="ECO:0007669"/>
    <property type="project" value="InterPro"/>
</dbReference>
<dbReference type="GO" id="GO:0000049">
    <property type="term" value="F:tRNA binding"/>
    <property type="evidence" value="ECO:0007669"/>
    <property type="project" value="UniProtKB-UniRule"/>
</dbReference>
<dbReference type="GO" id="GO:0006412">
    <property type="term" value="P:translation"/>
    <property type="evidence" value="ECO:0007669"/>
    <property type="project" value="UniProtKB-UniRule"/>
</dbReference>
<dbReference type="FunFam" id="3.30.1440.10:FF:000001">
    <property type="entry name" value="50S ribosomal protein L5"/>
    <property type="match status" value="1"/>
</dbReference>
<dbReference type="Gene3D" id="3.30.1440.10">
    <property type="match status" value="1"/>
</dbReference>
<dbReference type="HAMAP" id="MF_01333_B">
    <property type="entry name" value="Ribosomal_uL5_B"/>
    <property type="match status" value="1"/>
</dbReference>
<dbReference type="InterPro" id="IPR002132">
    <property type="entry name" value="Ribosomal_uL5"/>
</dbReference>
<dbReference type="InterPro" id="IPR020930">
    <property type="entry name" value="Ribosomal_uL5_bac-type"/>
</dbReference>
<dbReference type="InterPro" id="IPR031309">
    <property type="entry name" value="Ribosomal_uL5_C"/>
</dbReference>
<dbReference type="InterPro" id="IPR020929">
    <property type="entry name" value="Ribosomal_uL5_CS"/>
</dbReference>
<dbReference type="InterPro" id="IPR022803">
    <property type="entry name" value="Ribosomal_uL5_dom_sf"/>
</dbReference>
<dbReference type="InterPro" id="IPR031310">
    <property type="entry name" value="Ribosomal_uL5_N"/>
</dbReference>
<dbReference type="NCBIfam" id="NF000585">
    <property type="entry name" value="PRK00010.1"/>
    <property type="match status" value="1"/>
</dbReference>
<dbReference type="PANTHER" id="PTHR11994">
    <property type="entry name" value="60S RIBOSOMAL PROTEIN L11-RELATED"/>
    <property type="match status" value="1"/>
</dbReference>
<dbReference type="Pfam" id="PF00281">
    <property type="entry name" value="Ribosomal_L5"/>
    <property type="match status" value="1"/>
</dbReference>
<dbReference type="Pfam" id="PF00673">
    <property type="entry name" value="Ribosomal_L5_C"/>
    <property type="match status" value="1"/>
</dbReference>
<dbReference type="PIRSF" id="PIRSF002161">
    <property type="entry name" value="Ribosomal_L5"/>
    <property type="match status" value="1"/>
</dbReference>
<dbReference type="SUPFAM" id="SSF55282">
    <property type="entry name" value="RL5-like"/>
    <property type="match status" value="1"/>
</dbReference>
<dbReference type="PROSITE" id="PS00358">
    <property type="entry name" value="RIBOSOMAL_L5"/>
    <property type="match status" value="1"/>
</dbReference>
<gene>
    <name evidence="1" type="primary">rplE</name>
    <name type="ordered locus">DNO_1263</name>
</gene>
<accession>A5EX87</accession>
<feature type="chain" id="PRO_1000052729" description="Large ribosomal subunit protein uL5">
    <location>
        <begin position="1"/>
        <end position="179"/>
    </location>
</feature>
<name>RL5_DICNV</name>
<organism>
    <name type="scientific">Dichelobacter nodosus (strain VCS1703A)</name>
    <dbReference type="NCBI Taxonomy" id="246195"/>
    <lineage>
        <taxon>Bacteria</taxon>
        <taxon>Pseudomonadati</taxon>
        <taxon>Pseudomonadota</taxon>
        <taxon>Gammaproteobacteria</taxon>
        <taxon>Cardiobacteriales</taxon>
        <taxon>Cardiobacteriaceae</taxon>
        <taxon>Dichelobacter</taxon>
    </lineage>
</organism>
<sequence>MARLQKFYKEEVIKKLQSELGLKNVMEVPRLEKITINMGVGEAVNDKKIMDNAVRDLALISGQKPVVTKSKKSIAGFKIRDGWAIGCKVTLRRQQMYEFLDRLINVSLPRTRDFRGLNPKSFDGRGNYTFGVKEHIIFPEIDFEKTDAIRGMDITFTTSAKDNAQAKALLEAFGFPFRG</sequence>
<evidence type="ECO:0000255" key="1">
    <source>
        <dbReference type="HAMAP-Rule" id="MF_01333"/>
    </source>
</evidence>
<evidence type="ECO:0000305" key="2"/>
<proteinExistence type="inferred from homology"/>